<protein>
    <recommendedName>
        <fullName>Cyclin-dependent kinase 9</fullName>
        <ecNumber>2.7.11.22</ecNumber>
        <ecNumber>2.7.11.23</ecNumber>
    </recommendedName>
    <alternativeName>
        <fullName>Cell division protein kinase 9</fullName>
    </alternativeName>
</protein>
<comment type="function">
    <text evidence="2">Member of the cyclin-dependent kinase pair (CDK9/cyclin-T) complex, also called positive transcription elongation factor b (P-TEFb), which facilitates the transition from abortive to production elongation by phosphorylating the CTD (C-terminal domain) of the large subunit of RNA polymerase II (RNAP II), SUPT5H and RDBP. The CDK9/cyclin-K complex also has a kinase activity toward CTD of RNAP II and can substitute for P-TEFb in vitro (By similarity).</text>
</comment>
<comment type="catalytic activity">
    <reaction evidence="2">
        <text>L-seryl-[protein] + ATP = O-phospho-L-seryl-[protein] + ADP + H(+)</text>
        <dbReference type="Rhea" id="RHEA:17989"/>
        <dbReference type="Rhea" id="RHEA-COMP:9863"/>
        <dbReference type="Rhea" id="RHEA-COMP:11604"/>
        <dbReference type="ChEBI" id="CHEBI:15378"/>
        <dbReference type="ChEBI" id="CHEBI:29999"/>
        <dbReference type="ChEBI" id="CHEBI:30616"/>
        <dbReference type="ChEBI" id="CHEBI:83421"/>
        <dbReference type="ChEBI" id="CHEBI:456216"/>
        <dbReference type="EC" id="2.7.11.22"/>
    </reaction>
    <physiologicalReaction direction="left-to-right" evidence="2">
        <dbReference type="Rhea" id="RHEA:17990"/>
    </physiologicalReaction>
</comment>
<comment type="catalytic activity">
    <reaction evidence="2">
        <text>L-threonyl-[protein] + ATP = O-phospho-L-threonyl-[protein] + ADP + H(+)</text>
        <dbReference type="Rhea" id="RHEA:46608"/>
        <dbReference type="Rhea" id="RHEA-COMP:11060"/>
        <dbReference type="Rhea" id="RHEA-COMP:11605"/>
        <dbReference type="ChEBI" id="CHEBI:15378"/>
        <dbReference type="ChEBI" id="CHEBI:30013"/>
        <dbReference type="ChEBI" id="CHEBI:30616"/>
        <dbReference type="ChEBI" id="CHEBI:61977"/>
        <dbReference type="ChEBI" id="CHEBI:456216"/>
        <dbReference type="EC" id="2.7.11.22"/>
    </reaction>
    <physiologicalReaction direction="left-to-right" evidence="2">
        <dbReference type="Rhea" id="RHEA:46609"/>
    </physiologicalReaction>
</comment>
<comment type="catalytic activity">
    <reaction evidence="2">
        <text>[DNA-directed RNA polymerase] + ATP = phospho-[DNA-directed RNA polymerase] + ADP + H(+)</text>
        <dbReference type="Rhea" id="RHEA:10216"/>
        <dbReference type="Rhea" id="RHEA-COMP:11321"/>
        <dbReference type="Rhea" id="RHEA-COMP:11322"/>
        <dbReference type="ChEBI" id="CHEBI:15378"/>
        <dbReference type="ChEBI" id="CHEBI:30616"/>
        <dbReference type="ChEBI" id="CHEBI:43176"/>
        <dbReference type="ChEBI" id="CHEBI:68546"/>
        <dbReference type="ChEBI" id="CHEBI:456216"/>
        <dbReference type="EC" id="2.7.11.23"/>
    </reaction>
    <physiologicalReaction direction="left-to-right" evidence="2">
        <dbReference type="Rhea" id="RHEA:10217"/>
    </physiologicalReaction>
</comment>
<comment type="subunit">
    <text evidence="1">Associates with cyclin-T to form P-TEFb. Also associates with cyclin-K (By similarity).</text>
</comment>
<comment type="subcellular location">
    <subcellularLocation>
        <location evidence="1">Nucleus</location>
    </subcellularLocation>
</comment>
<comment type="similarity">
    <text evidence="6">Belongs to the protein kinase superfamily. CMGC Ser/Thr protein kinase family. CDC2/CDKX subfamily.</text>
</comment>
<gene>
    <name type="primary">CDK9</name>
    <name type="ORF">RCJMB04_9p8</name>
</gene>
<sequence length="372" mass="42803">MAKQYDMVECPFCDEVSKYEKLAKIGQGTFGEVFKAKHRQTGKKVALKKVLMENEKEGFPITALREIKILQLLKHENVVNLIEICRTKASPYNRCKGSIYLVFDFCEHDLAGLLSNTHVKFTLSEIKKVMQMLLNGLYYIHRNKILHRDMKAANVLITRDGVLKLADFGLARAFSLAKNSQPNRYTNRVVTLWYRPPELLLGERDYGPPIDLWGGGCIMAEMWTRSPIMQGNTEQHQLTLISQLCGSITPEVWPNVDKYELYQKLELPKGQKRKVKDRLKAYVKDPYALDLIDKLLVLDPAQRIDSDDALNHDFFWSDPMPSDLKNMLSTHNQSMFEYLAPPRRRGGHMPQQPANQGRNPAATNQTEFDRVF</sequence>
<evidence type="ECO:0000250" key="1"/>
<evidence type="ECO:0000250" key="2">
    <source>
        <dbReference type="UniProtKB" id="P50750"/>
    </source>
</evidence>
<evidence type="ECO:0000255" key="3">
    <source>
        <dbReference type="PROSITE-ProRule" id="PRU00159"/>
    </source>
</evidence>
<evidence type="ECO:0000255" key="4">
    <source>
        <dbReference type="PROSITE-ProRule" id="PRU10027"/>
    </source>
</evidence>
<evidence type="ECO:0000256" key="5">
    <source>
        <dbReference type="SAM" id="MobiDB-lite"/>
    </source>
</evidence>
<evidence type="ECO:0000305" key="6"/>
<feature type="chain" id="PRO_0000085803" description="Cyclin-dependent kinase 9">
    <location>
        <begin position="1"/>
        <end position="372"/>
    </location>
</feature>
<feature type="domain" description="Protein kinase" evidence="3">
    <location>
        <begin position="19"/>
        <end position="315"/>
    </location>
</feature>
<feature type="region of interest" description="Disordered" evidence="5">
    <location>
        <begin position="341"/>
        <end position="372"/>
    </location>
</feature>
<feature type="compositionally biased region" description="Polar residues" evidence="5">
    <location>
        <begin position="352"/>
        <end position="366"/>
    </location>
</feature>
<feature type="active site" description="Proton acceptor" evidence="3 4">
    <location>
        <position position="149"/>
    </location>
</feature>
<feature type="binding site" evidence="3">
    <location>
        <begin position="25"/>
        <end position="33"/>
    </location>
    <ligand>
        <name>ATP</name>
        <dbReference type="ChEBI" id="CHEBI:30616"/>
    </ligand>
</feature>
<feature type="binding site" evidence="3">
    <location>
        <position position="48"/>
    </location>
    <ligand>
        <name>ATP</name>
        <dbReference type="ChEBI" id="CHEBI:30616"/>
    </ligand>
</feature>
<accession>Q5ZKN1</accession>
<proteinExistence type="evidence at transcript level"/>
<reference key="1">
    <citation type="journal article" date="2005" name="Genome Biol.">
        <title>Full-length cDNAs from chicken bursal lymphocytes to facilitate gene function analysis.</title>
        <authorList>
            <person name="Caldwell R.B."/>
            <person name="Kierzek A.M."/>
            <person name="Arakawa H."/>
            <person name="Bezzubov Y."/>
            <person name="Zaim J."/>
            <person name="Fiedler P."/>
            <person name="Kutter S."/>
            <person name="Blagodatski A."/>
            <person name="Kostovska D."/>
            <person name="Koter M."/>
            <person name="Plachy J."/>
            <person name="Carninci P."/>
            <person name="Hayashizaki Y."/>
            <person name="Buerstedde J.-M."/>
        </authorList>
    </citation>
    <scope>NUCLEOTIDE SEQUENCE [LARGE SCALE MRNA]</scope>
    <source>
        <strain>CB</strain>
        <tissue>Bursa of Fabricius</tissue>
    </source>
</reference>
<organism>
    <name type="scientific">Gallus gallus</name>
    <name type="common">Chicken</name>
    <dbReference type="NCBI Taxonomy" id="9031"/>
    <lineage>
        <taxon>Eukaryota</taxon>
        <taxon>Metazoa</taxon>
        <taxon>Chordata</taxon>
        <taxon>Craniata</taxon>
        <taxon>Vertebrata</taxon>
        <taxon>Euteleostomi</taxon>
        <taxon>Archelosauria</taxon>
        <taxon>Archosauria</taxon>
        <taxon>Dinosauria</taxon>
        <taxon>Saurischia</taxon>
        <taxon>Theropoda</taxon>
        <taxon>Coelurosauria</taxon>
        <taxon>Aves</taxon>
        <taxon>Neognathae</taxon>
        <taxon>Galloanserae</taxon>
        <taxon>Galliformes</taxon>
        <taxon>Phasianidae</taxon>
        <taxon>Phasianinae</taxon>
        <taxon>Gallus</taxon>
    </lineage>
</organism>
<name>CDK9_CHICK</name>
<keyword id="KW-0067">ATP-binding</keyword>
<keyword id="KW-0418">Kinase</keyword>
<keyword id="KW-0547">Nucleotide-binding</keyword>
<keyword id="KW-0539">Nucleus</keyword>
<keyword id="KW-1185">Reference proteome</keyword>
<keyword id="KW-0723">Serine/threonine-protein kinase</keyword>
<keyword id="KW-0804">Transcription</keyword>
<keyword id="KW-0805">Transcription regulation</keyword>
<keyword id="KW-0808">Transferase</keyword>
<dbReference type="EC" id="2.7.11.22"/>
<dbReference type="EC" id="2.7.11.23"/>
<dbReference type="EMBL" id="AJ720053">
    <property type="protein sequence ID" value="CAG31712.1"/>
    <property type="molecule type" value="mRNA"/>
</dbReference>
<dbReference type="RefSeq" id="NP_001006201.1">
    <property type="nucleotide sequence ID" value="NM_001006201.3"/>
</dbReference>
<dbReference type="SMR" id="Q5ZKN1"/>
<dbReference type="FunCoup" id="Q5ZKN1">
    <property type="interactions" value="2266"/>
</dbReference>
<dbReference type="STRING" id="9031.ENSGALP00000047028"/>
<dbReference type="PaxDb" id="9031-ENSGALP00000008078"/>
<dbReference type="GeneID" id="417226"/>
<dbReference type="KEGG" id="gga:417226"/>
<dbReference type="CTD" id="1025"/>
<dbReference type="VEuPathDB" id="HostDB:geneid_417226"/>
<dbReference type="eggNOG" id="KOG0669">
    <property type="taxonomic scope" value="Eukaryota"/>
</dbReference>
<dbReference type="InParanoid" id="Q5ZKN1"/>
<dbReference type="OMA" id="FPHCDES"/>
<dbReference type="OrthoDB" id="204883at2759"/>
<dbReference type="PhylomeDB" id="Q5ZKN1"/>
<dbReference type="TreeFam" id="TF101039"/>
<dbReference type="PRO" id="PR:Q5ZKN1"/>
<dbReference type="Proteomes" id="UP000000539">
    <property type="component" value="Unassembled WGS sequence"/>
</dbReference>
<dbReference type="GO" id="GO:0005634">
    <property type="term" value="C:nucleus"/>
    <property type="evidence" value="ECO:0000318"/>
    <property type="project" value="GO_Central"/>
</dbReference>
<dbReference type="GO" id="GO:0070691">
    <property type="term" value="C:P-TEFb complex"/>
    <property type="evidence" value="ECO:0000250"/>
    <property type="project" value="UniProtKB"/>
</dbReference>
<dbReference type="GO" id="GO:0005524">
    <property type="term" value="F:ATP binding"/>
    <property type="evidence" value="ECO:0007669"/>
    <property type="project" value="UniProtKB-KW"/>
</dbReference>
<dbReference type="GO" id="GO:0004693">
    <property type="term" value="F:cyclin-dependent protein serine/threonine kinase activity"/>
    <property type="evidence" value="ECO:0000318"/>
    <property type="project" value="GO_Central"/>
</dbReference>
<dbReference type="GO" id="GO:0106310">
    <property type="term" value="F:protein serine kinase activity"/>
    <property type="evidence" value="ECO:0007669"/>
    <property type="project" value="RHEA"/>
</dbReference>
<dbReference type="GO" id="GO:0004674">
    <property type="term" value="F:protein serine/threonine kinase activity"/>
    <property type="evidence" value="ECO:0000250"/>
    <property type="project" value="UniProtKB"/>
</dbReference>
<dbReference type="GO" id="GO:0008353">
    <property type="term" value="F:RNA polymerase II CTD heptapeptide repeat kinase activity"/>
    <property type="evidence" value="ECO:0000250"/>
    <property type="project" value="UniProtKB"/>
</dbReference>
<dbReference type="GO" id="GO:0120187">
    <property type="term" value="P:positive regulation of protein localization to chromatin"/>
    <property type="evidence" value="ECO:0000250"/>
    <property type="project" value="UniProtKB"/>
</dbReference>
<dbReference type="GO" id="GO:0045944">
    <property type="term" value="P:positive regulation of transcription by RNA polymerase II"/>
    <property type="evidence" value="ECO:0000250"/>
    <property type="project" value="UniProtKB"/>
</dbReference>
<dbReference type="GO" id="GO:0032968">
    <property type="term" value="P:positive regulation of transcription elongation by RNA polymerase II"/>
    <property type="evidence" value="ECO:0000250"/>
    <property type="project" value="UniProtKB"/>
</dbReference>
<dbReference type="GO" id="GO:0006366">
    <property type="term" value="P:transcription by RNA polymerase II"/>
    <property type="evidence" value="ECO:0000250"/>
    <property type="project" value="UniProtKB"/>
</dbReference>
<dbReference type="CDD" id="cd07865">
    <property type="entry name" value="STKc_CDK9"/>
    <property type="match status" value="1"/>
</dbReference>
<dbReference type="FunFam" id="1.10.510.10:FF:000203">
    <property type="entry name" value="Cyclin-dependent kinase 9"/>
    <property type="match status" value="1"/>
</dbReference>
<dbReference type="FunFam" id="3.30.200.20:FF:000227">
    <property type="entry name" value="Cyclin-dependent kinase 9"/>
    <property type="match status" value="1"/>
</dbReference>
<dbReference type="Gene3D" id="3.30.200.20">
    <property type="entry name" value="Phosphorylase Kinase, domain 1"/>
    <property type="match status" value="1"/>
</dbReference>
<dbReference type="Gene3D" id="1.10.510.10">
    <property type="entry name" value="Transferase(Phosphotransferase) domain 1"/>
    <property type="match status" value="1"/>
</dbReference>
<dbReference type="InterPro" id="IPR050108">
    <property type="entry name" value="CDK"/>
</dbReference>
<dbReference type="InterPro" id="IPR011009">
    <property type="entry name" value="Kinase-like_dom_sf"/>
</dbReference>
<dbReference type="InterPro" id="IPR000719">
    <property type="entry name" value="Prot_kinase_dom"/>
</dbReference>
<dbReference type="InterPro" id="IPR017441">
    <property type="entry name" value="Protein_kinase_ATP_BS"/>
</dbReference>
<dbReference type="InterPro" id="IPR008271">
    <property type="entry name" value="Ser/Thr_kinase_AS"/>
</dbReference>
<dbReference type="PANTHER" id="PTHR24056">
    <property type="entry name" value="CELL DIVISION PROTEIN KINASE"/>
    <property type="match status" value="1"/>
</dbReference>
<dbReference type="PANTHER" id="PTHR24056:SF233">
    <property type="entry name" value="CYCLIN-DEPENDENT KINASE 9"/>
    <property type="match status" value="1"/>
</dbReference>
<dbReference type="Pfam" id="PF00069">
    <property type="entry name" value="Pkinase"/>
    <property type="match status" value="1"/>
</dbReference>
<dbReference type="SMART" id="SM00220">
    <property type="entry name" value="S_TKc"/>
    <property type="match status" value="1"/>
</dbReference>
<dbReference type="SUPFAM" id="SSF56112">
    <property type="entry name" value="Protein kinase-like (PK-like)"/>
    <property type="match status" value="1"/>
</dbReference>
<dbReference type="PROSITE" id="PS00107">
    <property type="entry name" value="PROTEIN_KINASE_ATP"/>
    <property type="match status" value="1"/>
</dbReference>
<dbReference type="PROSITE" id="PS50011">
    <property type="entry name" value="PROTEIN_KINASE_DOM"/>
    <property type="match status" value="1"/>
</dbReference>
<dbReference type="PROSITE" id="PS00108">
    <property type="entry name" value="PROTEIN_KINASE_ST"/>
    <property type="match status" value="1"/>
</dbReference>